<evidence type="ECO:0000255" key="1">
    <source>
        <dbReference type="HAMAP-Rule" id="MF_01349"/>
    </source>
</evidence>
<organism>
    <name type="scientific">Synechococcus sp. (strain CC9311)</name>
    <dbReference type="NCBI Taxonomy" id="64471"/>
    <lineage>
        <taxon>Bacteria</taxon>
        <taxon>Bacillati</taxon>
        <taxon>Cyanobacteriota</taxon>
        <taxon>Cyanophyceae</taxon>
        <taxon>Synechococcales</taxon>
        <taxon>Synechococcaceae</taxon>
        <taxon>Synechococcus</taxon>
    </lineage>
</organism>
<keyword id="KW-0067">ATP-binding</keyword>
<keyword id="KW-0963">Cytoplasm</keyword>
<keyword id="KW-0418">Kinase</keyword>
<keyword id="KW-0436">Ligase</keyword>
<keyword id="KW-0511">Multifunctional enzyme</keyword>
<keyword id="KW-0547">Nucleotide-binding</keyword>
<keyword id="KW-0566">Pantothenate biosynthesis</keyword>
<keyword id="KW-1185">Reference proteome</keyword>
<keyword id="KW-0808">Transferase</keyword>
<accession>Q0ICW2</accession>
<comment type="function">
    <text evidence="1">Catalyzes the condensation of pantoate with beta-alanine in an ATP-dependent reaction via a pantoyl-adenylate intermediate.</text>
</comment>
<comment type="function">
    <text evidence="1">Catalyzes the transfer of a phosphate group from ATP to either CMP or dCMP to form CDP or dCDP and ADP, respectively.</text>
</comment>
<comment type="catalytic activity">
    <reaction evidence="1">
        <text>(R)-pantoate + beta-alanine + ATP = (R)-pantothenate + AMP + diphosphate + H(+)</text>
        <dbReference type="Rhea" id="RHEA:10912"/>
        <dbReference type="ChEBI" id="CHEBI:15378"/>
        <dbReference type="ChEBI" id="CHEBI:15980"/>
        <dbReference type="ChEBI" id="CHEBI:29032"/>
        <dbReference type="ChEBI" id="CHEBI:30616"/>
        <dbReference type="ChEBI" id="CHEBI:33019"/>
        <dbReference type="ChEBI" id="CHEBI:57966"/>
        <dbReference type="ChEBI" id="CHEBI:456215"/>
        <dbReference type="EC" id="6.3.2.1"/>
    </reaction>
</comment>
<comment type="catalytic activity">
    <reaction evidence="1">
        <text>CMP + ATP = CDP + ADP</text>
        <dbReference type="Rhea" id="RHEA:11600"/>
        <dbReference type="ChEBI" id="CHEBI:30616"/>
        <dbReference type="ChEBI" id="CHEBI:58069"/>
        <dbReference type="ChEBI" id="CHEBI:60377"/>
        <dbReference type="ChEBI" id="CHEBI:456216"/>
        <dbReference type="EC" id="2.7.4.25"/>
    </reaction>
</comment>
<comment type="catalytic activity">
    <reaction evidence="1">
        <text>dCMP + ATP = dCDP + ADP</text>
        <dbReference type="Rhea" id="RHEA:25094"/>
        <dbReference type="ChEBI" id="CHEBI:30616"/>
        <dbReference type="ChEBI" id="CHEBI:57566"/>
        <dbReference type="ChEBI" id="CHEBI:58593"/>
        <dbReference type="ChEBI" id="CHEBI:456216"/>
        <dbReference type="EC" id="2.7.4.25"/>
    </reaction>
</comment>
<comment type="pathway">
    <text evidence="1">Cofactor biosynthesis; (R)-pantothenate biosynthesis; (R)-pantothenate from (R)-pantoate and beta-alanine: step 1/1.</text>
</comment>
<comment type="subcellular location">
    <subcellularLocation>
        <location evidence="1">Cytoplasm</location>
    </subcellularLocation>
</comment>
<comment type="similarity">
    <text evidence="1">In the N-terminal section; belongs to the pantothenate synthetase family.</text>
</comment>
<comment type="similarity">
    <text evidence="1">In the C-terminal section; belongs to the cytidylate kinase family. Type 1 subfamily.</text>
</comment>
<reference key="1">
    <citation type="journal article" date="2006" name="Proc. Natl. Acad. Sci. U.S.A.">
        <title>Genome sequence of Synechococcus CC9311: insights into adaptation to a coastal environment.</title>
        <authorList>
            <person name="Palenik B."/>
            <person name="Ren Q."/>
            <person name="Dupont C.L."/>
            <person name="Myers G.S."/>
            <person name="Heidelberg J.F."/>
            <person name="Badger J.H."/>
            <person name="Madupu R."/>
            <person name="Nelson W.C."/>
            <person name="Brinkac L.M."/>
            <person name="Dodson R.J."/>
            <person name="Durkin A.S."/>
            <person name="Daugherty S.C."/>
            <person name="Sullivan S.A."/>
            <person name="Khouri H."/>
            <person name="Mohamoud Y."/>
            <person name="Halpin R."/>
            <person name="Paulsen I.T."/>
        </authorList>
    </citation>
    <scope>NUCLEOTIDE SEQUENCE [LARGE SCALE GENOMIC DNA]</scope>
    <source>
        <strain>CC9311</strain>
    </source>
</reference>
<dbReference type="EC" id="6.3.2.1" evidence="1"/>
<dbReference type="EC" id="2.7.4.25" evidence="1"/>
<dbReference type="EMBL" id="CP000435">
    <property type="protein sequence ID" value="ABI45138.1"/>
    <property type="molecule type" value="Genomic_DNA"/>
</dbReference>
<dbReference type="RefSeq" id="WP_011618442.1">
    <property type="nucleotide sequence ID" value="NC_008319.1"/>
</dbReference>
<dbReference type="SMR" id="Q0ICW2"/>
<dbReference type="STRING" id="64471.sync_0483"/>
<dbReference type="KEGG" id="syg:sync_0483"/>
<dbReference type="eggNOG" id="COG0283">
    <property type="taxonomic scope" value="Bacteria"/>
</dbReference>
<dbReference type="eggNOG" id="COG0414">
    <property type="taxonomic scope" value="Bacteria"/>
</dbReference>
<dbReference type="HOGENOM" id="CLU_037427_0_0_3"/>
<dbReference type="UniPathway" id="UPA00028">
    <property type="reaction ID" value="UER00005"/>
</dbReference>
<dbReference type="Proteomes" id="UP000001961">
    <property type="component" value="Chromosome"/>
</dbReference>
<dbReference type="GO" id="GO:0005829">
    <property type="term" value="C:cytosol"/>
    <property type="evidence" value="ECO:0007669"/>
    <property type="project" value="TreeGrafter"/>
</dbReference>
<dbReference type="GO" id="GO:0005524">
    <property type="term" value="F:ATP binding"/>
    <property type="evidence" value="ECO:0007669"/>
    <property type="project" value="UniProtKB-UniRule"/>
</dbReference>
<dbReference type="GO" id="GO:0036430">
    <property type="term" value="F:CMP kinase activity"/>
    <property type="evidence" value="ECO:0007669"/>
    <property type="project" value="RHEA"/>
</dbReference>
<dbReference type="GO" id="GO:0036431">
    <property type="term" value="F:dCMP kinase activity"/>
    <property type="evidence" value="ECO:0007669"/>
    <property type="project" value="RHEA"/>
</dbReference>
<dbReference type="GO" id="GO:0004592">
    <property type="term" value="F:pantoate-beta-alanine ligase activity"/>
    <property type="evidence" value="ECO:0007669"/>
    <property type="project" value="UniProtKB-UniRule"/>
</dbReference>
<dbReference type="GO" id="GO:0015949">
    <property type="term" value="P:nucleobase-containing small molecule interconversion"/>
    <property type="evidence" value="ECO:0007669"/>
    <property type="project" value="TreeGrafter"/>
</dbReference>
<dbReference type="GO" id="GO:0015940">
    <property type="term" value="P:pantothenate biosynthetic process"/>
    <property type="evidence" value="ECO:0007669"/>
    <property type="project" value="UniProtKB-UniRule"/>
</dbReference>
<dbReference type="GO" id="GO:0006220">
    <property type="term" value="P:pyrimidine nucleotide metabolic process"/>
    <property type="evidence" value="ECO:0007669"/>
    <property type="project" value="UniProtKB-UniRule"/>
</dbReference>
<dbReference type="CDD" id="cd02020">
    <property type="entry name" value="CMPK"/>
    <property type="match status" value="1"/>
</dbReference>
<dbReference type="CDD" id="cd02019">
    <property type="entry name" value="NK"/>
    <property type="match status" value="1"/>
</dbReference>
<dbReference type="Gene3D" id="3.40.50.620">
    <property type="entry name" value="HUPs"/>
    <property type="match status" value="1"/>
</dbReference>
<dbReference type="Gene3D" id="3.40.50.300">
    <property type="entry name" value="P-loop containing nucleotide triphosphate hydrolases"/>
    <property type="match status" value="1"/>
</dbReference>
<dbReference type="Gene3D" id="3.30.1300.10">
    <property type="entry name" value="Pantoate-beta-alanine ligase, C-terminal domain"/>
    <property type="match status" value="1"/>
</dbReference>
<dbReference type="HAMAP" id="MF_00238">
    <property type="entry name" value="Cytidyl_kinase_type1"/>
    <property type="match status" value="1"/>
</dbReference>
<dbReference type="HAMAP" id="MF_00158">
    <property type="entry name" value="PanC"/>
    <property type="match status" value="1"/>
</dbReference>
<dbReference type="HAMAP" id="MF_01349">
    <property type="entry name" value="PanCY"/>
    <property type="match status" value="1"/>
</dbReference>
<dbReference type="InterPro" id="IPR003136">
    <property type="entry name" value="Cytidylate_kin"/>
</dbReference>
<dbReference type="InterPro" id="IPR011994">
    <property type="entry name" value="Cytidylate_kinase_dom"/>
</dbReference>
<dbReference type="InterPro" id="IPR027417">
    <property type="entry name" value="P-loop_NTPase"/>
</dbReference>
<dbReference type="InterPro" id="IPR003721">
    <property type="entry name" value="Pantoate_ligase"/>
</dbReference>
<dbReference type="InterPro" id="IPR024894">
    <property type="entry name" value="Pantoate_ligase/cytidylate_kin"/>
</dbReference>
<dbReference type="InterPro" id="IPR042176">
    <property type="entry name" value="Pantoate_ligase_C"/>
</dbReference>
<dbReference type="InterPro" id="IPR014729">
    <property type="entry name" value="Rossmann-like_a/b/a_fold"/>
</dbReference>
<dbReference type="NCBIfam" id="TIGR00017">
    <property type="entry name" value="cmk"/>
    <property type="match status" value="1"/>
</dbReference>
<dbReference type="NCBIfam" id="TIGR00018">
    <property type="entry name" value="panC"/>
    <property type="match status" value="1"/>
</dbReference>
<dbReference type="NCBIfam" id="NF010004">
    <property type="entry name" value="PRK13477.1"/>
    <property type="match status" value="1"/>
</dbReference>
<dbReference type="PANTHER" id="PTHR21299:SF2">
    <property type="entry name" value="CYTIDYLATE KINASE"/>
    <property type="match status" value="1"/>
</dbReference>
<dbReference type="PANTHER" id="PTHR21299">
    <property type="entry name" value="CYTIDYLATE KINASE/PANTOATE-BETA-ALANINE LIGASE"/>
    <property type="match status" value="1"/>
</dbReference>
<dbReference type="Pfam" id="PF02224">
    <property type="entry name" value="Cytidylate_kin"/>
    <property type="match status" value="1"/>
</dbReference>
<dbReference type="Pfam" id="PF02569">
    <property type="entry name" value="Pantoate_ligase"/>
    <property type="match status" value="1"/>
</dbReference>
<dbReference type="SUPFAM" id="SSF52374">
    <property type="entry name" value="Nucleotidylyl transferase"/>
    <property type="match status" value="1"/>
</dbReference>
<dbReference type="SUPFAM" id="SSF52540">
    <property type="entry name" value="P-loop containing nucleoside triphosphate hydrolases"/>
    <property type="match status" value="1"/>
</dbReference>
<name>PANCY_SYNS3</name>
<protein>
    <recommendedName>
        <fullName evidence="1">Bifunctional pantoate ligase/cytidylate kinase</fullName>
    </recommendedName>
    <domain>
        <recommendedName>
            <fullName evidence="1">Pantothenate synthetase</fullName>
            <shortName evidence="1">PS</shortName>
            <ecNumber evidence="1">6.3.2.1</ecNumber>
        </recommendedName>
        <alternativeName>
            <fullName evidence="1">Pantoate--beta-alanine ligase</fullName>
        </alternativeName>
        <alternativeName>
            <fullName evidence="1">Pantoate-activating enzyme</fullName>
        </alternativeName>
    </domain>
    <domain>
        <recommendedName>
            <fullName evidence="1">Cytidylate kinase</fullName>
            <shortName evidence="1">CK</shortName>
            <ecNumber evidence="1">2.7.4.25</ecNumber>
        </recommendedName>
        <alternativeName>
            <fullName evidence="1">Cytidine monophosphate kinase</fullName>
            <shortName evidence="1">CMP kinase</shortName>
        </alternativeName>
    </domain>
</protein>
<feature type="chain" id="PRO_0000333300" description="Bifunctional pantoate ligase/cytidylate kinase">
    <location>
        <begin position="1"/>
        <end position="494"/>
    </location>
</feature>
<feature type="region of interest" description="Pantoate--beta-alanine ligase">
    <location>
        <begin position="1"/>
        <end position="258"/>
    </location>
</feature>
<feature type="region of interest" description="Cytidylate kinase" evidence="1">
    <location>
        <begin position="259"/>
        <end position="494"/>
    </location>
</feature>
<feature type="active site" description="Proton donor" evidence="1">
    <location>
        <position position="14"/>
    </location>
</feature>
<feature type="binding site" evidence="1">
    <location>
        <begin position="7"/>
        <end position="14"/>
    </location>
    <ligand>
        <name>ATP</name>
        <dbReference type="ChEBI" id="CHEBI:30616"/>
    </ligand>
</feature>
<feature type="binding site" evidence="1">
    <location>
        <position position="41"/>
    </location>
    <ligand>
        <name>(R)-pantoate</name>
        <dbReference type="ChEBI" id="CHEBI:15980"/>
    </ligand>
</feature>
<feature type="binding site" evidence="1">
    <location>
        <position position="41"/>
    </location>
    <ligand>
        <name>beta-alanine</name>
        <dbReference type="ChEBI" id="CHEBI:57966"/>
    </ligand>
</feature>
<feature type="binding site" evidence="1">
    <location>
        <begin position="130"/>
        <end position="133"/>
    </location>
    <ligand>
        <name>ATP</name>
        <dbReference type="ChEBI" id="CHEBI:30616"/>
    </ligand>
</feature>
<feature type="binding site" evidence="1">
    <location>
        <position position="136"/>
    </location>
    <ligand>
        <name>(R)-pantoate</name>
        <dbReference type="ChEBI" id="CHEBI:15980"/>
    </ligand>
</feature>
<feature type="binding site" evidence="1">
    <location>
        <position position="159"/>
    </location>
    <ligand>
        <name>ATP</name>
        <dbReference type="ChEBI" id="CHEBI:30616"/>
    </ligand>
</feature>
<feature type="binding site" evidence="1">
    <location>
        <begin position="167"/>
        <end position="170"/>
    </location>
    <ligand>
        <name>ATP</name>
        <dbReference type="ChEBI" id="CHEBI:30616"/>
    </ligand>
</feature>
<gene>
    <name evidence="1" type="primary">panC/cmk</name>
    <name type="ordered locus">sync_0483</name>
</gene>
<sequence length="494" mass="53594">MHFVPTMGGLHHGHASLISAASCHKSGDVETLVSVFVNPLQFGPNEDFARYPRTFEADCELAELSGASAIWCPDESQIYPGGSAESWRIQAPKSLQSRLCGSTRPGHFDGVVTVVCRLLALAKPHQLFLGEKDWQQLTILRRMVLDLGLAVRVRGVPTVRDGDGLASSSRNRYLNAQQRQQGVLFAQVLSDARSACLHGGTALKPGEVKRRLEEVGLSVEYVDVVDPWFLQPSKSNQSSLTLLAAAVRCGSTRLIDHAFLMTRSPLVAIDGPAGAGKSTVTRAFAERLGLVYLDTGAMYRAVTWLVLEQGGDPGDSEAVDLVLNDLKVELEPLQQGVQVVRVNGHEVTDAIRDPRVTASVSAVASHACVRAAMTAQQQRMGKAGGLVAEGRDIGTAVFPDAELKVFLTATPKERARRRALDLEARGHEVPALPELEAQIVERDRLDSTREVAPLLQADDAIELISDGMSIDQVIDALEDLFRRRVGEEVWPTPV</sequence>
<proteinExistence type="inferred from homology"/>